<keyword id="KW-0963">Cytoplasm</keyword>
<keyword id="KW-0238">DNA-binding</keyword>
<keyword id="KW-0597">Phosphoprotein</keyword>
<keyword id="KW-0804">Transcription</keyword>
<keyword id="KW-0805">Transcription regulation</keyword>
<keyword id="KW-0902">Two-component regulatory system</keyword>
<sequence>MRLLVVEDEKSIAEAIQALLADKGYSVDLAFDGDDGLEYILTGLYDLVLLDIMLPKRSGLSVLKRVREAGLETPIIFLTAKSQTYDKVNGLDLGADDYITKPFEADELLARIRLRTRQSSLIRANQLRLGNIRLNTDSHELESKESSVKLSNKEFLLMEVFMRNAKQIIPKNQLISKVWGPSDNSEYNQLEVFISFLRKKLRFLKADIEIITTKGFGYSLEERT</sequence>
<comment type="function">
    <text>Member of the two-component regulatory system DltS/DltR. Regulates the expression of the dlt operon.</text>
</comment>
<comment type="subcellular location">
    <subcellularLocation>
        <location evidence="3">Cytoplasm</location>
    </subcellularLocation>
</comment>
<comment type="PTM">
    <text evidence="3">Phosphorylated by DltS.</text>
</comment>
<organism>
    <name type="scientific">Streptococcus agalactiae serotype III (strain NEM316)</name>
    <dbReference type="NCBI Taxonomy" id="211110"/>
    <lineage>
        <taxon>Bacteria</taxon>
        <taxon>Bacillati</taxon>
        <taxon>Bacillota</taxon>
        <taxon>Bacilli</taxon>
        <taxon>Lactobacillales</taxon>
        <taxon>Streptococcaceae</taxon>
        <taxon>Streptococcus</taxon>
    </lineage>
</organism>
<accession>P0A4H9</accession>
<accession>Q8DXQ7</accession>
<accession>Q8E3C6</accession>
<accession>Q8VM69</accession>
<feature type="chain" id="PRO_0000081066" description="Transcriptional regulatory protein DltR">
    <location>
        <begin position="1"/>
        <end position="224"/>
    </location>
</feature>
<feature type="domain" description="Response regulatory" evidence="1">
    <location>
        <begin position="2"/>
        <end position="116"/>
    </location>
</feature>
<feature type="DNA-binding region" description="OmpR/PhoB-type" evidence="2">
    <location>
        <begin position="124"/>
        <end position="222"/>
    </location>
</feature>
<feature type="modified residue" description="4-aspartylphosphate" evidence="1">
    <location>
        <position position="51"/>
    </location>
</feature>
<gene>
    <name type="primary">dltR</name>
    <name type="ordered locus">gbs1835</name>
</gene>
<name>DLTR_STRA3</name>
<dbReference type="EMBL" id="AJ291784">
    <property type="protein sequence ID" value="CAC83083.1"/>
    <property type="molecule type" value="Genomic_DNA"/>
</dbReference>
<dbReference type="EMBL" id="AL766853">
    <property type="protein sequence ID" value="CAD47494.1"/>
    <property type="molecule type" value="Genomic_DNA"/>
</dbReference>
<dbReference type="RefSeq" id="WP_001238594.1">
    <property type="nucleotide sequence ID" value="NC_004368.1"/>
</dbReference>
<dbReference type="SMR" id="P0A4H9"/>
<dbReference type="GeneID" id="66886631"/>
<dbReference type="KEGG" id="san:gbs1835"/>
<dbReference type="eggNOG" id="COG0745">
    <property type="taxonomic scope" value="Bacteria"/>
</dbReference>
<dbReference type="HOGENOM" id="CLU_000445_30_1_9"/>
<dbReference type="Proteomes" id="UP000000823">
    <property type="component" value="Chromosome"/>
</dbReference>
<dbReference type="GO" id="GO:0005829">
    <property type="term" value="C:cytosol"/>
    <property type="evidence" value="ECO:0007669"/>
    <property type="project" value="TreeGrafter"/>
</dbReference>
<dbReference type="GO" id="GO:0032993">
    <property type="term" value="C:protein-DNA complex"/>
    <property type="evidence" value="ECO:0007669"/>
    <property type="project" value="TreeGrafter"/>
</dbReference>
<dbReference type="GO" id="GO:0000156">
    <property type="term" value="F:phosphorelay response regulator activity"/>
    <property type="evidence" value="ECO:0007669"/>
    <property type="project" value="TreeGrafter"/>
</dbReference>
<dbReference type="GO" id="GO:0000976">
    <property type="term" value="F:transcription cis-regulatory region binding"/>
    <property type="evidence" value="ECO:0007669"/>
    <property type="project" value="TreeGrafter"/>
</dbReference>
<dbReference type="GO" id="GO:0006355">
    <property type="term" value="P:regulation of DNA-templated transcription"/>
    <property type="evidence" value="ECO:0007669"/>
    <property type="project" value="InterPro"/>
</dbReference>
<dbReference type="CDD" id="cd17625">
    <property type="entry name" value="REC_OmpR_DrrD-like"/>
    <property type="match status" value="1"/>
</dbReference>
<dbReference type="CDD" id="cd00383">
    <property type="entry name" value="trans_reg_C"/>
    <property type="match status" value="1"/>
</dbReference>
<dbReference type="FunFam" id="3.40.50.2300:FF:000001">
    <property type="entry name" value="DNA-binding response regulator PhoB"/>
    <property type="match status" value="1"/>
</dbReference>
<dbReference type="Gene3D" id="3.40.50.2300">
    <property type="match status" value="1"/>
</dbReference>
<dbReference type="Gene3D" id="6.10.250.690">
    <property type="match status" value="1"/>
</dbReference>
<dbReference type="Gene3D" id="1.10.10.10">
    <property type="entry name" value="Winged helix-like DNA-binding domain superfamily/Winged helix DNA-binding domain"/>
    <property type="match status" value="1"/>
</dbReference>
<dbReference type="InterPro" id="IPR011006">
    <property type="entry name" value="CheY-like_superfamily"/>
</dbReference>
<dbReference type="InterPro" id="IPR001867">
    <property type="entry name" value="OmpR/PhoB-type_DNA-bd"/>
</dbReference>
<dbReference type="InterPro" id="IPR001789">
    <property type="entry name" value="Sig_transdc_resp-reg_receiver"/>
</dbReference>
<dbReference type="InterPro" id="IPR039420">
    <property type="entry name" value="WalR-like"/>
</dbReference>
<dbReference type="InterPro" id="IPR036388">
    <property type="entry name" value="WH-like_DNA-bd_sf"/>
</dbReference>
<dbReference type="PANTHER" id="PTHR48111">
    <property type="entry name" value="REGULATOR OF RPOS"/>
    <property type="match status" value="1"/>
</dbReference>
<dbReference type="PANTHER" id="PTHR48111:SF22">
    <property type="entry name" value="REGULATOR OF RPOS"/>
    <property type="match status" value="1"/>
</dbReference>
<dbReference type="Pfam" id="PF00072">
    <property type="entry name" value="Response_reg"/>
    <property type="match status" value="1"/>
</dbReference>
<dbReference type="Pfam" id="PF00486">
    <property type="entry name" value="Trans_reg_C"/>
    <property type="match status" value="1"/>
</dbReference>
<dbReference type="SMART" id="SM00448">
    <property type="entry name" value="REC"/>
    <property type="match status" value="1"/>
</dbReference>
<dbReference type="SMART" id="SM00862">
    <property type="entry name" value="Trans_reg_C"/>
    <property type="match status" value="1"/>
</dbReference>
<dbReference type="SUPFAM" id="SSF52172">
    <property type="entry name" value="CheY-like"/>
    <property type="match status" value="1"/>
</dbReference>
<dbReference type="PROSITE" id="PS51755">
    <property type="entry name" value="OMPR_PHOB"/>
    <property type="match status" value="1"/>
</dbReference>
<dbReference type="PROSITE" id="PS50110">
    <property type="entry name" value="RESPONSE_REGULATORY"/>
    <property type="match status" value="1"/>
</dbReference>
<protein>
    <recommendedName>
        <fullName>Transcriptional regulatory protein DltR</fullName>
    </recommendedName>
</protein>
<evidence type="ECO:0000255" key="1">
    <source>
        <dbReference type="PROSITE-ProRule" id="PRU00169"/>
    </source>
</evidence>
<evidence type="ECO:0000255" key="2">
    <source>
        <dbReference type="PROSITE-ProRule" id="PRU01091"/>
    </source>
</evidence>
<evidence type="ECO:0000305" key="3"/>
<reference key="1">
    <citation type="journal article" date="2001" name="J. Bacteriol.">
        <title>Regulation of D-alanyl-lipoteichoic acid biosynthesis in Streptococcus agalactiae involves a novel two-component regulatory system.</title>
        <authorList>
            <person name="Poyart C."/>
            <person name="Lamy M.C."/>
            <person name="Boumaila C."/>
            <person name="Fiedler F."/>
            <person name="Trieu-Cuot P."/>
        </authorList>
    </citation>
    <scope>NUCLEOTIDE SEQUENCE [GENOMIC DNA]</scope>
    <source>
        <strain>NEM316</strain>
    </source>
</reference>
<reference key="2">
    <citation type="journal article" date="2002" name="Mol. Microbiol.">
        <title>Genome sequence of Streptococcus agalactiae, a pathogen causing invasive neonatal disease.</title>
        <authorList>
            <person name="Glaser P."/>
            <person name="Rusniok C."/>
            <person name="Buchrieser C."/>
            <person name="Chevalier F."/>
            <person name="Frangeul L."/>
            <person name="Msadek T."/>
            <person name="Zouine M."/>
            <person name="Couve E."/>
            <person name="Lalioui L."/>
            <person name="Poyart C."/>
            <person name="Trieu-Cuot P."/>
            <person name="Kunst F."/>
        </authorList>
    </citation>
    <scope>NUCLEOTIDE SEQUENCE [LARGE SCALE GENOMIC DNA]</scope>
    <source>
        <strain>NEM316</strain>
    </source>
</reference>
<proteinExistence type="inferred from homology"/>